<keyword id="KW-0025">Alternative splicing</keyword>
<keyword id="KW-0963">Cytoplasm</keyword>
<keyword id="KW-0206">Cytoskeleton</keyword>
<keyword id="KW-0472">Membrane</keyword>
<keyword id="KW-0479">Metal-binding</keyword>
<keyword id="KW-0597">Phosphoprotein</keyword>
<keyword id="KW-1267">Proteomics identification</keyword>
<keyword id="KW-1185">Reference proteome</keyword>
<keyword id="KW-0677">Repeat</keyword>
<keyword id="KW-0808">Transferase</keyword>
<keyword id="KW-0812">Transmembrane</keyword>
<keyword id="KW-1133">Transmembrane helix</keyword>
<keyword id="KW-0833">Ubl conjugation pathway</keyword>
<keyword id="KW-0862">Zinc</keyword>
<keyword id="KW-0863">Zinc-finger</keyword>
<feature type="chain" id="PRO_0000056061" description="E3 ubiquitin-protein ligase RNF19A">
    <location>
        <begin position="1"/>
        <end position="838"/>
    </location>
</feature>
<feature type="transmembrane region" description="Helical" evidence="2">
    <location>
        <begin position="368"/>
        <end position="388"/>
    </location>
</feature>
<feature type="transmembrane region" description="Helical" evidence="2">
    <location>
        <begin position="424"/>
        <end position="444"/>
    </location>
</feature>
<feature type="zinc finger region" description="RING-type 1" evidence="3">
    <location>
        <begin position="132"/>
        <end position="179"/>
    </location>
</feature>
<feature type="zinc finger region" description="IBR-type" evidence="3">
    <location>
        <begin position="199"/>
        <end position="264"/>
    </location>
</feature>
<feature type="zinc finger region" description="RING-type 2; atypical" evidence="3">
    <location>
        <begin position="301"/>
        <end position="332"/>
    </location>
</feature>
<feature type="region of interest" description="Disordered" evidence="4">
    <location>
        <begin position="41"/>
        <end position="61"/>
    </location>
</feature>
<feature type="region of interest" description="TRIAD supradomain" evidence="3">
    <location>
        <begin position="128"/>
        <end position="351"/>
    </location>
</feature>
<feature type="region of interest" description="Disordered" evidence="4">
    <location>
        <begin position="622"/>
        <end position="685"/>
    </location>
</feature>
<feature type="region of interest" description="Interaction with CASR" evidence="10">
    <location>
        <begin position="660"/>
        <end position="838"/>
    </location>
</feature>
<feature type="region of interest" description="Disordered" evidence="4">
    <location>
        <begin position="700"/>
        <end position="721"/>
    </location>
</feature>
<feature type="compositionally biased region" description="Low complexity" evidence="4">
    <location>
        <begin position="46"/>
        <end position="57"/>
    </location>
</feature>
<feature type="compositionally biased region" description="Polar residues" evidence="4">
    <location>
        <begin position="630"/>
        <end position="662"/>
    </location>
</feature>
<feature type="compositionally biased region" description="Basic residues" evidence="4">
    <location>
        <begin position="671"/>
        <end position="683"/>
    </location>
</feature>
<feature type="compositionally biased region" description="Polar residues" evidence="4">
    <location>
        <begin position="700"/>
        <end position="717"/>
    </location>
</feature>
<feature type="active site" evidence="3">
    <location>
        <position position="316"/>
    </location>
</feature>
<feature type="binding site" evidence="3">
    <location>
        <position position="132"/>
    </location>
    <ligand>
        <name>Zn(2+)</name>
        <dbReference type="ChEBI" id="CHEBI:29105"/>
        <label>1</label>
    </ligand>
</feature>
<feature type="binding site" evidence="3">
    <location>
        <position position="135"/>
    </location>
    <ligand>
        <name>Zn(2+)</name>
        <dbReference type="ChEBI" id="CHEBI:29105"/>
        <label>1</label>
    </ligand>
</feature>
<feature type="binding site" evidence="3">
    <location>
        <position position="150"/>
    </location>
    <ligand>
        <name>Zn(2+)</name>
        <dbReference type="ChEBI" id="CHEBI:29105"/>
        <label>2</label>
    </ligand>
</feature>
<feature type="binding site" evidence="3">
    <location>
        <position position="152"/>
    </location>
    <ligand>
        <name>Zn(2+)</name>
        <dbReference type="ChEBI" id="CHEBI:29105"/>
        <label>2</label>
    </ligand>
</feature>
<feature type="binding site" evidence="3">
    <location>
        <position position="155"/>
    </location>
    <ligand>
        <name>Zn(2+)</name>
        <dbReference type="ChEBI" id="CHEBI:29105"/>
        <label>1</label>
    </ligand>
</feature>
<feature type="binding site" evidence="3">
    <location>
        <position position="158"/>
    </location>
    <ligand>
        <name>Zn(2+)</name>
        <dbReference type="ChEBI" id="CHEBI:29105"/>
        <label>1</label>
    </ligand>
</feature>
<feature type="binding site" evidence="3">
    <location>
        <position position="176"/>
    </location>
    <ligand>
        <name>Zn(2+)</name>
        <dbReference type="ChEBI" id="CHEBI:29105"/>
        <label>2</label>
    </ligand>
</feature>
<feature type="binding site" evidence="3">
    <location>
        <position position="179"/>
    </location>
    <ligand>
        <name>Zn(2+)</name>
        <dbReference type="ChEBI" id="CHEBI:29105"/>
        <label>2</label>
    </ligand>
</feature>
<feature type="binding site" evidence="3">
    <location>
        <position position="219"/>
    </location>
    <ligand>
        <name>Zn(2+)</name>
        <dbReference type="ChEBI" id="CHEBI:29105"/>
        <label>3</label>
    </ligand>
</feature>
<feature type="binding site" evidence="3">
    <location>
        <position position="224"/>
    </location>
    <ligand>
        <name>Zn(2+)</name>
        <dbReference type="ChEBI" id="CHEBI:29105"/>
        <label>3</label>
    </ligand>
</feature>
<feature type="binding site" evidence="3">
    <location>
        <position position="241"/>
    </location>
    <ligand>
        <name>Zn(2+)</name>
        <dbReference type="ChEBI" id="CHEBI:29105"/>
        <label>3</label>
    </ligand>
</feature>
<feature type="binding site" evidence="3">
    <location>
        <position position="246"/>
    </location>
    <ligand>
        <name>Zn(2+)</name>
        <dbReference type="ChEBI" id="CHEBI:29105"/>
        <label>3</label>
    </ligand>
</feature>
<feature type="binding site" evidence="3">
    <location>
        <position position="251"/>
    </location>
    <ligand>
        <name>Zn(2+)</name>
        <dbReference type="ChEBI" id="CHEBI:29105"/>
        <label>4</label>
    </ligand>
</feature>
<feature type="binding site" evidence="3">
    <location>
        <position position="254"/>
    </location>
    <ligand>
        <name>Zn(2+)</name>
        <dbReference type="ChEBI" id="CHEBI:29105"/>
        <label>4</label>
    </ligand>
</feature>
<feature type="binding site" evidence="3">
    <location>
        <position position="259"/>
    </location>
    <ligand>
        <name>Zn(2+)</name>
        <dbReference type="ChEBI" id="CHEBI:29105"/>
        <label>4</label>
    </ligand>
</feature>
<feature type="binding site" evidence="3">
    <location>
        <position position="264"/>
    </location>
    <ligand>
        <name>Zn(2+)</name>
        <dbReference type="ChEBI" id="CHEBI:29105"/>
        <label>4</label>
    </ligand>
</feature>
<feature type="binding site" evidence="3">
    <location>
        <position position="301"/>
    </location>
    <ligand>
        <name>Zn(2+)</name>
        <dbReference type="ChEBI" id="CHEBI:29105"/>
        <label>5</label>
    </ligand>
</feature>
<feature type="binding site" evidence="3">
    <location>
        <position position="304"/>
    </location>
    <ligand>
        <name>Zn(2+)</name>
        <dbReference type="ChEBI" id="CHEBI:29105"/>
        <label>5</label>
    </ligand>
</feature>
<feature type="binding site" evidence="3">
    <location>
        <position position="321"/>
    </location>
    <ligand>
        <name>Zn(2+)</name>
        <dbReference type="ChEBI" id="CHEBI:29105"/>
        <label>5</label>
    </ligand>
</feature>
<feature type="binding site" evidence="3">
    <location>
        <position position="324"/>
    </location>
    <ligand>
        <name>Zn(2+)</name>
        <dbReference type="ChEBI" id="CHEBI:29105"/>
        <label>5</label>
    </ligand>
</feature>
<feature type="binding site" evidence="3">
    <location>
        <position position="329"/>
    </location>
    <ligand>
        <name>Zn(2+)</name>
        <dbReference type="ChEBI" id="CHEBI:29105"/>
        <label>6</label>
    </ligand>
</feature>
<feature type="binding site" evidence="3">
    <location>
        <position position="332"/>
    </location>
    <ligand>
        <name>Zn(2+)</name>
        <dbReference type="ChEBI" id="CHEBI:29105"/>
        <label>6</label>
    </ligand>
</feature>
<feature type="binding site" evidence="3">
    <location>
        <position position="340"/>
    </location>
    <ligand>
        <name>Zn(2+)</name>
        <dbReference type="ChEBI" id="CHEBI:29105"/>
        <label>6</label>
    </ligand>
</feature>
<feature type="binding site" evidence="3">
    <location>
        <position position="347"/>
    </location>
    <ligand>
        <name>Zn(2+)</name>
        <dbReference type="ChEBI" id="CHEBI:29105"/>
        <label>6</label>
    </ligand>
</feature>
<feature type="modified residue" description="Phosphoserine" evidence="14 15">
    <location>
        <position position="631"/>
    </location>
</feature>
<feature type="splice variant" id="VSP_028631" description="In isoform 3." evidence="12">
    <location>
        <begin position="1"/>
        <end position="31"/>
    </location>
</feature>
<feature type="splice variant" id="VSP_021010" description="In isoform 2." evidence="11">
    <original>RYSLSGESGTVSLGTVSDNASTKAMAGSILNSY</original>
    <variation>AAVAAAGRWAYSPATLRCRRSEELKNIHDSS</variation>
    <location>
        <begin position="572"/>
        <end position="604"/>
    </location>
</feature>
<feature type="splice variant" id="VSP_021011" description="In isoform 2." evidence="11">
    <location>
        <begin position="605"/>
        <end position="838"/>
    </location>
</feature>
<feature type="sequence variant" id="VAR_028045" description="In dbSNP:rs9642785.">
    <original>Q</original>
    <variation>H</variation>
    <location>
        <position position="835"/>
    </location>
</feature>
<feature type="mutagenesis site" description="Abolishes interaction with VCP and E3 ligase activity toward mutant SOD1; when associated with S-135." evidence="9">
    <original>C</original>
    <variation>S</variation>
    <location>
        <position position="132"/>
    </location>
</feature>
<feature type="mutagenesis site" description="Abolishes interaction with VCP and E3 ligase activity toward mutant SOD1; when associated with S-132." evidence="9">
    <original>C</original>
    <variation>S</variation>
    <location>
        <position position="135"/>
    </location>
</feature>
<feature type="sequence conflict" description="In Ref. 1; BAB39353." evidence="13" ref="1">
    <original>H</original>
    <variation>Y</variation>
    <location>
        <position position="645"/>
    </location>
</feature>
<feature type="sequence conflict" description="In Ref. 6; CAB53700." evidence="13" ref="6">
    <original>S</original>
    <variation>R</variation>
    <location>
        <position position="744"/>
    </location>
</feature>
<reference key="1">
    <citation type="journal article" date="2001" name="Biochem. Biophys. Res. Commun.">
        <title>A novel centrosomal ring-finger protein, dorfin, mediates ubiquitin ligase activity.</title>
        <authorList>
            <person name="Niwa J."/>
            <person name="Ishigaki S."/>
            <person name="Doyu M."/>
            <person name="Suzuki T."/>
            <person name="Tanaka K."/>
            <person name="Sobue G."/>
        </authorList>
    </citation>
    <scope>NUCLEOTIDE SEQUENCE [MRNA] (ISOFORM 1)</scope>
    <scope>FUNCTION</scope>
    <scope>INTERACTION WITH UBE2L3 AND UBE2L6</scope>
    <scope>SUBCELLULAR LOCATION</scope>
    <scope>TISSUE SPECIFICITY</scope>
    <source>
        <tissue>Spinal cord</tissue>
    </source>
</reference>
<reference key="2">
    <citation type="journal article" date="2004" name="Genome Res.">
        <title>The status, quality, and expansion of the NIH full-length cDNA project: the Mammalian Gene Collection (MGC).</title>
        <authorList>
            <consortium name="The MGC Project Team"/>
        </authorList>
    </citation>
    <scope>NUCLEOTIDE SEQUENCE [LARGE SCALE MRNA] (ISOFORM 1)</scope>
    <source>
        <tissue>Brain</tissue>
    </source>
</reference>
<reference key="3">
    <citation type="submission" date="2006-09" db="EMBL/GenBank/DDBJ databases">
        <title>Expression and promoter activity of MaLR element of Dorfin gene related to Parkinson disease.</title>
        <authorList>
            <person name="Kim T."/>
            <person name="Huh J."/>
            <person name="Kim H."/>
        </authorList>
    </citation>
    <scope>NUCLEOTIDE SEQUENCE [MRNA] OF 1-89 (ISOFORM 3)</scope>
</reference>
<reference key="4">
    <citation type="journal article" date="2004" name="Nat. Genet.">
        <title>Complete sequencing and characterization of 21,243 full-length human cDNAs.</title>
        <authorList>
            <person name="Ota T."/>
            <person name="Suzuki Y."/>
            <person name="Nishikawa T."/>
            <person name="Otsuki T."/>
            <person name="Sugiyama T."/>
            <person name="Irie R."/>
            <person name="Wakamatsu A."/>
            <person name="Hayashi K."/>
            <person name="Sato H."/>
            <person name="Nagai K."/>
            <person name="Kimura K."/>
            <person name="Makita H."/>
            <person name="Sekine M."/>
            <person name="Obayashi M."/>
            <person name="Nishi T."/>
            <person name="Shibahara T."/>
            <person name="Tanaka T."/>
            <person name="Ishii S."/>
            <person name="Yamamoto J."/>
            <person name="Saito K."/>
            <person name="Kawai Y."/>
            <person name="Isono Y."/>
            <person name="Nakamura Y."/>
            <person name="Nagahari K."/>
            <person name="Murakami K."/>
            <person name="Yasuda T."/>
            <person name="Iwayanagi T."/>
            <person name="Wagatsuma M."/>
            <person name="Shiratori A."/>
            <person name="Sudo H."/>
            <person name="Hosoiri T."/>
            <person name="Kaku Y."/>
            <person name="Kodaira H."/>
            <person name="Kondo H."/>
            <person name="Sugawara M."/>
            <person name="Takahashi M."/>
            <person name="Kanda K."/>
            <person name="Yokoi T."/>
            <person name="Furuya T."/>
            <person name="Kikkawa E."/>
            <person name="Omura Y."/>
            <person name="Abe K."/>
            <person name="Kamihara K."/>
            <person name="Katsuta N."/>
            <person name="Sato K."/>
            <person name="Tanikawa M."/>
            <person name="Yamazaki M."/>
            <person name="Ninomiya K."/>
            <person name="Ishibashi T."/>
            <person name="Yamashita H."/>
            <person name="Murakawa K."/>
            <person name="Fujimori K."/>
            <person name="Tanai H."/>
            <person name="Kimata M."/>
            <person name="Watanabe M."/>
            <person name="Hiraoka S."/>
            <person name="Chiba Y."/>
            <person name="Ishida S."/>
            <person name="Ono Y."/>
            <person name="Takiguchi S."/>
            <person name="Watanabe S."/>
            <person name="Yosida M."/>
            <person name="Hotuta T."/>
            <person name="Kusano J."/>
            <person name="Kanehori K."/>
            <person name="Takahashi-Fujii A."/>
            <person name="Hara H."/>
            <person name="Tanase T.-O."/>
            <person name="Nomura Y."/>
            <person name="Togiya S."/>
            <person name="Komai F."/>
            <person name="Hara R."/>
            <person name="Takeuchi K."/>
            <person name="Arita M."/>
            <person name="Imose N."/>
            <person name="Musashino K."/>
            <person name="Yuuki H."/>
            <person name="Oshima A."/>
            <person name="Sasaki N."/>
            <person name="Aotsuka S."/>
            <person name="Yoshikawa Y."/>
            <person name="Matsunawa H."/>
            <person name="Ichihara T."/>
            <person name="Shiohata N."/>
            <person name="Sano S."/>
            <person name="Moriya S."/>
            <person name="Momiyama H."/>
            <person name="Satoh N."/>
            <person name="Takami S."/>
            <person name="Terashima Y."/>
            <person name="Suzuki O."/>
            <person name="Nakagawa S."/>
            <person name="Senoh A."/>
            <person name="Mizoguchi H."/>
            <person name="Goto Y."/>
            <person name="Shimizu F."/>
            <person name="Wakebe H."/>
            <person name="Hishigaki H."/>
            <person name="Watanabe T."/>
            <person name="Sugiyama A."/>
            <person name="Takemoto M."/>
            <person name="Kawakami B."/>
            <person name="Yamazaki M."/>
            <person name="Watanabe K."/>
            <person name="Kumagai A."/>
            <person name="Itakura S."/>
            <person name="Fukuzumi Y."/>
            <person name="Fujimori Y."/>
            <person name="Komiyama M."/>
            <person name="Tashiro H."/>
            <person name="Tanigami A."/>
            <person name="Fujiwara T."/>
            <person name="Ono T."/>
            <person name="Yamada K."/>
            <person name="Fujii Y."/>
            <person name="Ozaki K."/>
            <person name="Hirao M."/>
            <person name="Ohmori Y."/>
            <person name="Kawabata A."/>
            <person name="Hikiji T."/>
            <person name="Kobatake N."/>
            <person name="Inagaki H."/>
            <person name="Ikema Y."/>
            <person name="Okamoto S."/>
            <person name="Okitani R."/>
            <person name="Kawakami T."/>
            <person name="Noguchi S."/>
            <person name="Itoh T."/>
            <person name="Shigeta K."/>
            <person name="Senba T."/>
            <person name="Matsumura K."/>
            <person name="Nakajima Y."/>
            <person name="Mizuno T."/>
            <person name="Morinaga M."/>
            <person name="Sasaki M."/>
            <person name="Togashi T."/>
            <person name="Oyama M."/>
            <person name="Hata H."/>
            <person name="Watanabe M."/>
            <person name="Komatsu T."/>
            <person name="Mizushima-Sugano J."/>
            <person name="Satoh T."/>
            <person name="Shirai Y."/>
            <person name="Takahashi Y."/>
            <person name="Nakagawa K."/>
            <person name="Okumura K."/>
            <person name="Nagase T."/>
            <person name="Nomura N."/>
            <person name="Kikuchi H."/>
            <person name="Masuho Y."/>
            <person name="Yamashita R."/>
            <person name="Nakai K."/>
            <person name="Yada T."/>
            <person name="Nakamura Y."/>
            <person name="Ohara O."/>
            <person name="Isogai T."/>
            <person name="Sugano S."/>
        </authorList>
    </citation>
    <scope>NUCLEOTIDE SEQUENCE [LARGE SCALE MRNA] OF 426-838 (ISOFORM 1)</scope>
    <scope>NUCLEOTIDE SEQUENCE [LARGE SCALE MRNA] OF 142-838 (ISOFORM 2)</scope>
    <source>
        <tissue>Hepatoma</tissue>
        <tissue>Ovarian carcinoma</tissue>
        <tissue>Placenta</tissue>
    </source>
</reference>
<reference key="5">
    <citation type="journal article" date="2000" name="Mol. Cell. Biochem.">
        <title>A set of proteins interacting with transcription factor Sp1 identified in a two-hybrid screening.</title>
        <authorList>
            <person name="Gunther M."/>
            <person name="Laithier M."/>
            <person name="Brison O."/>
        </authorList>
    </citation>
    <scope>NUCLEOTIDE SEQUENCE [MRNA] OF 422-824 (ISOFORM 1)</scope>
    <scope>INTERACTION WITH SP1</scope>
    <source>
        <tissue>Colon</tissue>
    </source>
</reference>
<reference key="6">
    <citation type="journal article" date="2007" name="BMC Genomics">
        <title>The full-ORF clone resource of the German cDNA consortium.</title>
        <authorList>
            <person name="Bechtel S."/>
            <person name="Rosenfelder H."/>
            <person name="Duda A."/>
            <person name="Schmidt C.P."/>
            <person name="Ernst U."/>
            <person name="Wellenreuther R."/>
            <person name="Mehrle A."/>
            <person name="Schuster C."/>
            <person name="Bahr A."/>
            <person name="Bloecker H."/>
            <person name="Heubner D."/>
            <person name="Hoerlein A."/>
            <person name="Michel G."/>
            <person name="Wedler H."/>
            <person name="Koehrer K."/>
            <person name="Ottenwaelder B."/>
            <person name="Poustka A."/>
            <person name="Wiemann S."/>
            <person name="Schupp I."/>
        </authorList>
    </citation>
    <scope>NUCLEOTIDE SEQUENCE [LARGE SCALE MRNA] OF 524-838 (ISOFORM 1)</scope>
    <source>
        <tissue>Fetal kidney</tissue>
        <tissue>Testis</tissue>
    </source>
</reference>
<reference key="7">
    <citation type="journal article" date="2002" name="J. Biol. Chem.">
        <title>Dorfin ubiquitylates mutant SOD1 and prevents mutant SOD1-mediated neurotoxicity.</title>
        <authorList>
            <person name="Niwa J."/>
            <person name="Ishigaki S."/>
            <person name="Hishikawa N."/>
            <person name="Yamamoto M."/>
            <person name="Doyu M."/>
            <person name="Murata S."/>
            <person name="Tanaka K."/>
            <person name="Taniguchi N."/>
            <person name="Sobue G."/>
        </authorList>
    </citation>
    <scope>FUNCTION</scope>
    <scope>SUBCELLULAR LOCATION</scope>
    <scope>INTERACTION WITH SOD1</scope>
</reference>
<reference key="8">
    <citation type="journal article" date="2003" name="J. Biol. Chem.">
        <title>Dorfin localizes to Lewy bodies and ubiquitylates synphilin-1.</title>
        <authorList>
            <person name="Ito T."/>
            <person name="Niwa J."/>
            <person name="Hishikawa N."/>
            <person name="Ishigaki S."/>
            <person name="Doyu M."/>
            <person name="Sobue G."/>
        </authorList>
    </citation>
    <scope>FUNCTION</scope>
    <scope>SUBCELLULAR LOCATION</scope>
    <scope>INTERACTION WITH SNCAIP</scope>
</reference>
<reference key="9">
    <citation type="journal article" date="2004" name="J. Biol. Chem.">
        <title>Physical and functional interaction between dorfin and valosin-containing protein that are colocalized in ubiquitylated inclusions in neurodegenerative disorders.</title>
        <authorList>
            <person name="Ishigaki S."/>
            <person name="Hishikawa N."/>
            <person name="Niwa J."/>
            <person name="Iemura S."/>
            <person name="Natsume T."/>
            <person name="Hori S."/>
            <person name="Kakizuka A."/>
            <person name="Tanaka K."/>
            <person name="Sobue G."/>
        </authorList>
    </citation>
    <scope>FUNCTION</scope>
    <scope>INTERACTION WITH VCP</scope>
    <scope>MUTAGENESIS OF CYS-132 AND CYS-135</scope>
    <scope>SUBCELLULAR LOCATION</scope>
</reference>
<reference key="10">
    <citation type="journal article" date="2006" name="J. Biol. Chem.">
        <title>Calcium-sensing receptor ubiquitination and degradation mediated by the E3 ubiquitin ligase dorfin.</title>
        <authorList>
            <person name="Huang Y."/>
            <person name="Niwa J."/>
            <person name="Sobue G."/>
            <person name="Breitwieser G.E."/>
        </authorList>
    </citation>
    <scope>FUNCTION</scope>
    <scope>INTERACTION WITH CASR AND VCP</scope>
</reference>
<reference key="11">
    <citation type="journal article" date="2010" name="Sci. Signal.">
        <title>Quantitative phosphoproteomics reveals widespread full phosphorylation site occupancy during mitosis.</title>
        <authorList>
            <person name="Olsen J.V."/>
            <person name="Vermeulen M."/>
            <person name="Santamaria A."/>
            <person name="Kumar C."/>
            <person name="Miller M.L."/>
            <person name="Jensen L.J."/>
            <person name="Gnad F."/>
            <person name="Cox J."/>
            <person name="Jensen T.S."/>
            <person name="Nigg E.A."/>
            <person name="Brunak S."/>
            <person name="Mann M."/>
        </authorList>
    </citation>
    <scope>IDENTIFICATION BY MASS SPECTROMETRY [LARGE SCALE ANALYSIS]</scope>
    <source>
        <tissue>Cervix carcinoma</tissue>
    </source>
</reference>
<reference key="12">
    <citation type="journal article" date="2011" name="Sci. Signal.">
        <title>System-wide temporal characterization of the proteome and phosphoproteome of human embryonic stem cell differentiation.</title>
        <authorList>
            <person name="Rigbolt K.T."/>
            <person name="Prokhorova T.A."/>
            <person name="Akimov V."/>
            <person name="Henningsen J."/>
            <person name="Johansen P.T."/>
            <person name="Kratchmarova I."/>
            <person name="Kassem M."/>
            <person name="Mann M."/>
            <person name="Olsen J.V."/>
            <person name="Blagoev B."/>
        </authorList>
    </citation>
    <scope>PHOSPHORYLATION [LARGE SCALE ANALYSIS] AT SER-631</scope>
    <scope>IDENTIFICATION BY MASS SPECTROMETRY [LARGE SCALE ANALYSIS]</scope>
</reference>
<reference key="13">
    <citation type="journal article" date="2014" name="J. Proteomics">
        <title>An enzyme assisted RP-RPLC approach for in-depth analysis of human liver phosphoproteome.</title>
        <authorList>
            <person name="Bian Y."/>
            <person name="Song C."/>
            <person name="Cheng K."/>
            <person name="Dong M."/>
            <person name="Wang F."/>
            <person name="Huang J."/>
            <person name="Sun D."/>
            <person name="Wang L."/>
            <person name="Ye M."/>
            <person name="Zou H."/>
        </authorList>
    </citation>
    <scope>PHOSPHORYLATION [LARGE SCALE ANALYSIS] AT SER-631</scope>
    <scope>IDENTIFICATION BY MASS SPECTROMETRY [LARGE SCALE ANALYSIS]</scope>
    <source>
        <tissue>Liver</tissue>
    </source>
</reference>
<accession>Q9NV58</accession>
<accession>A3KCU9</accession>
<accession>Q52LG1</accession>
<accession>Q9H5H9</accession>
<accession>Q9H8M8</accession>
<accession>Q9UFG0</accession>
<accession>Q9UFX6</accession>
<accession>Q9Y4Y1</accession>
<sequence>MQEQEIGFISKYNEGLCVNTDPVSILTSILDMSLHRQMGSDRDLQSSASSVSLPSVKKAPKKRRISIGSLFRRKKDNKRKSRELNGGVDGIASIESIHSEMCTDKNSIFSTNTSSDNGLTSISKQIGDFIECPLCLLRHSKDRFPDIMTCHHRSCVDCLRQYLRIEISESRVNISCPECTERFNPHDIRLILSDDVLMEKYEEFMLRRWLVADPDCRWCPAPDCGYAVIAFGCASCPKLTCGREGCGTEFCYHCKQIWHPNQTCDAARQERAQSLRLRTIRSSSISYSQESGAAADDIKPCPRCAAYIIKMNDGSCNHMTCAVCGCEFCWLCMKEISDLHYLSPSGCTFWGKKPWSRKKKILWQLGTLVGAPVGIALIAGIAIPAMIIGIPVYVGRKIHNRYEGKDVSKHKRNLAIAGGVTLSVIVSPVVAAVTVGIGVPIMLAYVYGVVPISLCRSGGCGVSAGNGKGVRIEFDDENDINVGGTNTAVDTTSVAEARHNPSIGEGSVGGLTGSLSASGSHMDRIGAIRDNLSETASTMALAGASITGSLSGSAMVNCFNRLEVQADVQKERYSLSGESGTVSLGTVSDNASTKAMAGSILNSYIPLDKEGNSMEVQVDIESKPSKFRHNSGSSSVDDGSATRSHAGGSSSGLPEGKSSATKWSKEATAGKKSKSGKLRKKGNMKINETREDMDAQLLEQQSTNSSEFEAPSLSDSMPSVADSHSSHFSEFSCSDLESMKTSCSHGSSDYHTRFATVNILPEVENDRLENSPHQCSISVVTQTASCSEVSQLNHIAEEHGNNGIKPNVDLYFGDALKETNNNHSHQTMELKVAIQTEI</sequence>
<dbReference type="EC" id="2.3.2.31" evidence="1"/>
<dbReference type="EMBL" id="AB029316">
    <property type="protein sequence ID" value="BAB39353.1"/>
    <property type="molecule type" value="mRNA"/>
</dbReference>
<dbReference type="EMBL" id="BC093938">
    <property type="protein sequence ID" value="AAH93938.1"/>
    <property type="molecule type" value="mRNA"/>
</dbReference>
<dbReference type="EMBL" id="BC093940">
    <property type="protein sequence ID" value="AAH93940.1"/>
    <property type="molecule type" value="mRNA"/>
</dbReference>
<dbReference type="EMBL" id="AB271914">
    <property type="protein sequence ID" value="BAF48117.1"/>
    <property type="molecule type" value="mRNA"/>
</dbReference>
<dbReference type="EMBL" id="AK001774">
    <property type="protein sequence ID" value="BAA91900.1"/>
    <property type="molecule type" value="mRNA"/>
</dbReference>
<dbReference type="EMBL" id="AK023455">
    <property type="protein sequence ID" value="BAB14581.1"/>
    <property type="status" value="ALT_INIT"/>
    <property type="molecule type" value="mRNA"/>
</dbReference>
<dbReference type="EMBL" id="AK027070">
    <property type="protein sequence ID" value="BAB15647.1"/>
    <property type="status" value="ALT_INIT"/>
    <property type="molecule type" value="mRNA"/>
</dbReference>
<dbReference type="EMBL" id="AJ242975">
    <property type="protein sequence ID" value="CAB45132.1"/>
    <property type="molecule type" value="mRNA"/>
</dbReference>
<dbReference type="EMBL" id="AL110253">
    <property type="protein sequence ID" value="CAB53700.1"/>
    <property type="molecule type" value="mRNA"/>
</dbReference>
<dbReference type="EMBL" id="AL122096">
    <property type="protein sequence ID" value="CAB59264.1"/>
    <property type="molecule type" value="mRNA"/>
</dbReference>
<dbReference type="CCDS" id="CCDS6286.1">
    <molecule id="Q9NV58-1"/>
</dbReference>
<dbReference type="PIR" id="T34528">
    <property type="entry name" value="T34528"/>
</dbReference>
<dbReference type="RefSeq" id="NP_001267468.1">
    <molecule id="Q9NV58-1"/>
    <property type="nucleotide sequence ID" value="NM_001280539.2"/>
</dbReference>
<dbReference type="RefSeq" id="NP_001340766.1">
    <molecule id="Q9NV58-1"/>
    <property type="nucleotide sequence ID" value="NM_001353837.2"/>
</dbReference>
<dbReference type="RefSeq" id="NP_001340767.1">
    <molecule id="Q9NV58-1"/>
    <property type="nucleotide sequence ID" value="NM_001353838.2"/>
</dbReference>
<dbReference type="RefSeq" id="NP_056250.3">
    <molecule id="Q9NV58-1"/>
    <property type="nucleotide sequence ID" value="NM_015435.4"/>
</dbReference>
<dbReference type="RefSeq" id="NP_904355.1">
    <molecule id="Q9NV58-1"/>
    <property type="nucleotide sequence ID" value="NM_183419.4"/>
</dbReference>
<dbReference type="RefSeq" id="XP_005250910.1">
    <property type="nucleotide sequence ID" value="XM_005250853.3"/>
</dbReference>
<dbReference type="RefSeq" id="XP_016868791.1">
    <property type="nucleotide sequence ID" value="XM_017013302.1"/>
</dbReference>
<dbReference type="RefSeq" id="XP_016868792.1">
    <property type="nucleotide sequence ID" value="XM_017013303.1"/>
</dbReference>
<dbReference type="RefSeq" id="XP_047277620.1">
    <molecule id="Q9NV58-1"/>
    <property type="nucleotide sequence ID" value="XM_047421664.1"/>
</dbReference>
<dbReference type="RefSeq" id="XP_047277621.1">
    <molecule id="Q9NV58-1"/>
    <property type="nucleotide sequence ID" value="XM_047421665.1"/>
</dbReference>
<dbReference type="RefSeq" id="XP_047277622.1">
    <molecule id="Q9NV58-1"/>
    <property type="nucleotide sequence ID" value="XM_047421666.1"/>
</dbReference>
<dbReference type="RefSeq" id="XP_047277623.1">
    <molecule id="Q9NV58-1"/>
    <property type="nucleotide sequence ID" value="XM_047421667.1"/>
</dbReference>
<dbReference type="RefSeq" id="XP_047277624.1">
    <molecule id="Q9NV58-1"/>
    <property type="nucleotide sequence ID" value="XM_047421668.1"/>
</dbReference>
<dbReference type="RefSeq" id="XP_047277625.1">
    <molecule id="Q9NV58-1"/>
    <property type="nucleotide sequence ID" value="XM_047421669.1"/>
</dbReference>
<dbReference type="RefSeq" id="XP_047277626.1">
    <molecule id="Q9NV58-1"/>
    <property type="nucleotide sequence ID" value="XM_047421670.1"/>
</dbReference>
<dbReference type="RefSeq" id="XP_047277627.1">
    <molecule id="Q9NV58-1"/>
    <property type="nucleotide sequence ID" value="XM_047421671.1"/>
</dbReference>
<dbReference type="RefSeq" id="XP_047277628.1">
    <molecule id="Q9NV58-1"/>
    <property type="nucleotide sequence ID" value="XM_047421672.1"/>
</dbReference>
<dbReference type="RefSeq" id="XP_047277629.1">
    <molecule id="Q9NV58-1"/>
    <property type="nucleotide sequence ID" value="XM_047421673.1"/>
</dbReference>
<dbReference type="RefSeq" id="XP_054216220.1">
    <molecule id="Q9NV58-1"/>
    <property type="nucleotide sequence ID" value="XM_054360245.1"/>
</dbReference>
<dbReference type="RefSeq" id="XP_054216221.1">
    <molecule id="Q9NV58-1"/>
    <property type="nucleotide sequence ID" value="XM_054360246.1"/>
</dbReference>
<dbReference type="RefSeq" id="XP_054216222.1">
    <molecule id="Q9NV58-1"/>
    <property type="nucleotide sequence ID" value="XM_054360247.1"/>
</dbReference>
<dbReference type="RefSeq" id="XP_054216223.1">
    <molecule id="Q9NV58-1"/>
    <property type="nucleotide sequence ID" value="XM_054360248.1"/>
</dbReference>
<dbReference type="RefSeq" id="XP_054216224.1">
    <molecule id="Q9NV58-1"/>
    <property type="nucleotide sequence ID" value="XM_054360249.1"/>
</dbReference>
<dbReference type="RefSeq" id="XP_054216225.1">
    <molecule id="Q9NV58-1"/>
    <property type="nucleotide sequence ID" value="XM_054360250.1"/>
</dbReference>
<dbReference type="RefSeq" id="XP_054216226.1">
    <molecule id="Q9NV58-1"/>
    <property type="nucleotide sequence ID" value="XM_054360251.1"/>
</dbReference>
<dbReference type="RefSeq" id="XP_054216227.1">
    <molecule id="Q9NV58-1"/>
    <property type="nucleotide sequence ID" value="XM_054360252.1"/>
</dbReference>
<dbReference type="RefSeq" id="XP_054216228.1">
    <molecule id="Q9NV58-1"/>
    <property type="nucleotide sequence ID" value="XM_054360253.1"/>
</dbReference>
<dbReference type="RefSeq" id="XP_054216229.1">
    <molecule id="Q9NV58-1"/>
    <property type="nucleotide sequence ID" value="XM_054360254.1"/>
</dbReference>
<dbReference type="BioGRID" id="117405">
    <property type="interactions" value="27"/>
</dbReference>
<dbReference type="CORUM" id="Q9NV58"/>
<dbReference type="FunCoup" id="Q9NV58">
    <property type="interactions" value="1316"/>
</dbReference>
<dbReference type="IntAct" id="Q9NV58">
    <property type="interactions" value="15"/>
</dbReference>
<dbReference type="MINT" id="Q9NV58"/>
<dbReference type="STRING" id="9606.ENSP00000428968"/>
<dbReference type="GlyGen" id="Q9NV58">
    <property type="glycosylation" value="2 sites, 1 O-linked glycan (1 site)"/>
</dbReference>
<dbReference type="iPTMnet" id="Q9NV58"/>
<dbReference type="PhosphoSitePlus" id="Q9NV58"/>
<dbReference type="BioMuta" id="RNF19A"/>
<dbReference type="DMDM" id="116242764"/>
<dbReference type="jPOST" id="Q9NV58"/>
<dbReference type="MassIVE" id="Q9NV58"/>
<dbReference type="PaxDb" id="9606-ENSP00000428968"/>
<dbReference type="PeptideAtlas" id="Q9NV58"/>
<dbReference type="ProteomicsDB" id="82747">
    <molecule id="Q9NV58-1"/>
</dbReference>
<dbReference type="ProteomicsDB" id="82748">
    <molecule id="Q9NV58-2"/>
</dbReference>
<dbReference type="ProteomicsDB" id="82749">
    <molecule id="Q9NV58-3"/>
</dbReference>
<dbReference type="Pumba" id="Q9NV58"/>
<dbReference type="Antibodypedia" id="3140">
    <property type="antibodies" value="215 antibodies from 29 providers"/>
</dbReference>
<dbReference type="DNASU" id="25897"/>
<dbReference type="Ensembl" id="ENST00000341084.7">
    <molecule id="Q9NV58-1"/>
    <property type="protein sequence ID" value="ENSP00000342667.2"/>
    <property type="gene ID" value="ENSG00000034677.13"/>
</dbReference>
<dbReference type="Ensembl" id="ENST00000519449.5">
    <molecule id="Q9NV58-1"/>
    <property type="protein sequence ID" value="ENSP00000428968.1"/>
    <property type="gene ID" value="ENSG00000034677.13"/>
</dbReference>
<dbReference type="GeneID" id="25897"/>
<dbReference type="KEGG" id="hsa:25897"/>
<dbReference type="MANE-Select" id="ENST00000341084.7">
    <property type="protein sequence ID" value="ENSP00000342667.2"/>
    <property type="RefSeq nucleotide sequence ID" value="NM_183419.4"/>
    <property type="RefSeq protein sequence ID" value="NP_904355.1"/>
</dbReference>
<dbReference type="UCSC" id="uc003yjj.3">
    <molecule id="Q9NV58-1"/>
    <property type="organism name" value="human"/>
</dbReference>
<dbReference type="AGR" id="HGNC:13432"/>
<dbReference type="CTD" id="25897"/>
<dbReference type="DisGeNET" id="25897"/>
<dbReference type="GeneCards" id="RNF19A"/>
<dbReference type="HGNC" id="HGNC:13432">
    <property type="gene designation" value="RNF19A"/>
</dbReference>
<dbReference type="HPA" id="ENSG00000034677">
    <property type="expression patterns" value="Low tissue specificity"/>
</dbReference>
<dbReference type="MIM" id="607119">
    <property type="type" value="gene"/>
</dbReference>
<dbReference type="neXtProt" id="NX_Q9NV58"/>
<dbReference type="OpenTargets" id="ENSG00000034677"/>
<dbReference type="PharmGKB" id="PA162401601"/>
<dbReference type="VEuPathDB" id="HostDB:ENSG00000034677"/>
<dbReference type="eggNOG" id="KOG1815">
    <property type="taxonomic scope" value="Eukaryota"/>
</dbReference>
<dbReference type="GeneTree" id="ENSGT00940000158703"/>
<dbReference type="HOGENOM" id="CLU_016793_1_0_1"/>
<dbReference type="InParanoid" id="Q9NV58"/>
<dbReference type="OMA" id="HQCSISL"/>
<dbReference type="OrthoDB" id="1431934at2759"/>
<dbReference type="PAN-GO" id="Q9NV58">
    <property type="GO annotations" value="7 GO annotations based on evolutionary models"/>
</dbReference>
<dbReference type="PhylomeDB" id="Q9NV58"/>
<dbReference type="TreeFam" id="TF324777"/>
<dbReference type="PathwayCommons" id="Q9NV58"/>
<dbReference type="Reactome" id="R-HSA-983168">
    <property type="pathway name" value="Antigen processing: Ubiquitination &amp; Proteasome degradation"/>
</dbReference>
<dbReference type="SignaLink" id="Q9NV58"/>
<dbReference type="SIGNOR" id="Q9NV58"/>
<dbReference type="UniPathway" id="UPA00143"/>
<dbReference type="BioGRID-ORCS" id="25897">
    <property type="hits" value="64 hits in 1187 CRISPR screens"/>
</dbReference>
<dbReference type="CD-CODE" id="8C2F96ED">
    <property type="entry name" value="Centrosome"/>
</dbReference>
<dbReference type="ChiTaRS" id="RNF19A">
    <property type="organism name" value="human"/>
</dbReference>
<dbReference type="GeneWiki" id="RNF19A"/>
<dbReference type="GenomeRNAi" id="25897"/>
<dbReference type="Pharos" id="Q9NV58">
    <property type="development level" value="Tbio"/>
</dbReference>
<dbReference type="PRO" id="PR:Q9NV58"/>
<dbReference type="Proteomes" id="UP000005640">
    <property type="component" value="Chromosome 8"/>
</dbReference>
<dbReference type="RNAct" id="Q9NV58">
    <property type="molecule type" value="protein"/>
</dbReference>
<dbReference type="Bgee" id="ENSG00000034677">
    <property type="expression patterns" value="Expressed in calcaneal tendon and 187 other cell types or tissues"/>
</dbReference>
<dbReference type="ExpressionAtlas" id="Q9NV58">
    <property type="expression patterns" value="baseline and differential"/>
</dbReference>
<dbReference type="GO" id="GO:0005813">
    <property type="term" value="C:centrosome"/>
    <property type="evidence" value="ECO:0000304"/>
    <property type="project" value="UniProtKB"/>
</dbReference>
<dbReference type="GO" id="GO:0005737">
    <property type="term" value="C:cytoplasm"/>
    <property type="evidence" value="ECO:0000318"/>
    <property type="project" value="GO_Central"/>
</dbReference>
<dbReference type="GO" id="GO:0005829">
    <property type="term" value="C:cytosol"/>
    <property type="evidence" value="ECO:0000304"/>
    <property type="project" value="Reactome"/>
</dbReference>
<dbReference type="GO" id="GO:0016020">
    <property type="term" value="C:membrane"/>
    <property type="evidence" value="ECO:0007669"/>
    <property type="project" value="UniProtKB-SubCell"/>
</dbReference>
<dbReference type="GO" id="GO:0000151">
    <property type="term" value="C:ubiquitin ligase complex"/>
    <property type="evidence" value="ECO:0000318"/>
    <property type="project" value="GO_Central"/>
</dbReference>
<dbReference type="GO" id="GO:0031624">
    <property type="term" value="F:ubiquitin conjugating enzyme binding"/>
    <property type="evidence" value="ECO:0000318"/>
    <property type="project" value="GO_Central"/>
</dbReference>
<dbReference type="GO" id="GO:0061630">
    <property type="term" value="F:ubiquitin protein ligase activity"/>
    <property type="evidence" value="ECO:0000318"/>
    <property type="project" value="GO_Central"/>
</dbReference>
<dbReference type="GO" id="GO:0008270">
    <property type="term" value="F:zinc ion binding"/>
    <property type="evidence" value="ECO:0007669"/>
    <property type="project" value="UniProtKB-KW"/>
</dbReference>
<dbReference type="GO" id="GO:0000226">
    <property type="term" value="P:microtubule cytoskeleton organization"/>
    <property type="evidence" value="ECO:0000304"/>
    <property type="project" value="UniProtKB"/>
</dbReference>
<dbReference type="GO" id="GO:0016567">
    <property type="term" value="P:protein ubiquitination"/>
    <property type="evidence" value="ECO:0007669"/>
    <property type="project" value="UniProtKB-UniPathway"/>
</dbReference>
<dbReference type="GO" id="GO:0006511">
    <property type="term" value="P:ubiquitin-dependent protein catabolic process"/>
    <property type="evidence" value="ECO:0000318"/>
    <property type="project" value="GO_Central"/>
</dbReference>
<dbReference type="CDD" id="cd20362">
    <property type="entry name" value="BRcat_RBR_RNF19A"/>
    <property type="match status" value="1"/>
</dbReference>
<dbReference type="CDD" id="cd20355">
    <property type="entry name" value="Rcat_RBR_RNF19"/>
    <property type="match status" value="1"/>
</dbReference>
<dbReference type="CDD" id="cd16775">
    <property type="entry name" value="RING-HC_RBR_RNF19A"/>
    <property type="match status" value="1"/>
</dbReference>
<dbReference type="FunFam" id="1.20.120.1750:FF:000001">
    <property type="entry name" value="RBR-type E3 ubiquitin transferase"/>
    <property type="match status" value="1"/>
</dbReference>
<dbReference type="FunFam" id="2.20.25.20:FF:000004">
    <property type="entry name" value="RBR-type E3 ubiquitin transferase"/>
    <property type="match status" value="1"/>
</dbReference>
<dbReference type="FunFam" id="3.30.40.10:FF:000052">
    <property type="entry name" value="RBR-type E3 ubiquitin transferase"/>
    <property type="match status" value="1"/>
</dbReference>
<dbReference type="Gene3D" id="1.20.120.1750">
    <property type="match status" value="1"/>
</dbReference>
<dbReference type="Gene3D" id="2.20.25.20">
    <property type="match status" value="1"/>
</dbReference>
<dbReference type="Gene3D" id="3.30.40.10">
    <property type="entry name" value="Zinc/RING finger domain, C3HC4 (zinc finger)"/>
    <property type="match status" value="1"/>
</dbReference>
<dbReference type="InterPro" id="IPR031127">
    <property type="entry name" value="E3_UB_ligase_RBR"/>
</dbReference>
<dbReference type="InterPro" id="IPR002867">
    <property type="entry name" value="IBR_dom"/>
</dbReference>
<dbReference type="InterPro" id="IPR044066">
    <property type="entry name" value="TRIAD_supradom"/>
</dbReference>
<dbReference type="InterPro" id="IPR001841">
    <property type="entry name" value="Znf_RING"/>
</dbReference>
<dbReference type="InterPro" id="IPR013083">
    <property type="entry name" value="Znf_RING/FYVE/PHD"/>
</dbReference>
<dbReference type="PANTHER" id="PTHR11685">
    <property type="entry name" value="RBR FAMILY RING FINGER AND IBR DOMAIN-CONTAINING"/>
    <property type="match status" value="1"/>
</dbReference>
<dbReference type="Pfam" id="PF01485">
    <property type="entry name" value="IBR"/>
    <property type="match status" value="2"/>
</dbReference>
<dbReference type="SMART" id="SM00647">
    <property type="entry name" value="IBR"/>
    <property type="match status" value="2"/>
</dbReference>
<dbReference type="SMART" id="SM00184">
    <property type="entry name" value="RING"/>
    <property type="match status" value="1"/>
</dbReference>
<dbReference type="SUPFAM" id="SSF57850">
    <property type="entry name" value="RING/U-box"/>
    <property type="match status" value="3"/>
</dbReference>
<dbReference type="PROSITE" id="PS51873">
    <property type="entry name" value="TRIAD"/>
    <property type="match status" value="1"/>
</dbReference>
<dbReference type="PROSITE" id="PS50089">
    <property type="entry name" value="ZF_RING_2"/>
    <property type="match status" value="1"/>
</dbReference>
<protein>
    <recommendedName>
        <fullName>E3 ubiquitin-protein ligase RNF19A</fullName>
        <ecNumber evidence="1">2.3.2.31</ecNumber>
    </recommendedName>
    <alternativeName>
        <fullName>Double ring-finger protein</fullName>
        <shortName>Dorfin</shortName>
    </alternativeName>
    <alternativeName>
        <fullName>RING finger protein 19A</fullName>
    </alternativeName>
    <alternativeName>
        <fullName>p38</fullName>
    </alternativeName>
</protein>
<proteinExistence type="evidence at protein level"/>
<gene>
    <name type="primary">RNF19A</name>
    <name type="synonym">RNF19</name>
</gene>
<evidence type="ECO:0000250" key="1">
    <source>
        <dbReference type="UniProtKB" id="O60260"/>
    </source>
</evidence>
<evidence type="ECO:0000255" key="2"/>
<evidence type="ECO:0000255" key="3">
    <source>
        <dbReference type="PROSITE-ProRule" id="PRU01221"/>
    </source>
</evidence>
<evidence type="ECO:0000256" key="4">
    <source>
        <dbReference type="SAM" id="MobiDB-lite"/>
    </source>
</evidence>
<evidence type="ECO:0000269" key="5">
    <source>
    </source>
</evidence>
<evidence type="ECO:0000269" key="6">
    <source>
    </source>
</evidence>
<evidence type="ECO:0000269" key="7">
    <source>
    </source>
</evidence>
<evidence type="ECO:0000269" key="8">
    <source>
    </source>
</evidence>
<evidence type="ECO:0000269" key="9">
    <source>
    </source>
</evidence>
<evidence type="ECO:0000269" key="10">
    <source>
    </source>
</evidence>
<evidence type="ECO:0000303" key="11">
    <source>
    </source>
</evidence>
<evidence type="ECO:0000303" key="12">
    <source ref="3"/>
</evidence>
<evidence type="ECO:0000305" key="13"/>
<evidence type="ECO:0007744" key="14">
    <source>
    </source>
</evidence>
<evidence type="ECO:0007744" key="15">
    <source>
    </source>
</evidence>
<name>RN19A_HUMAN</name>
<organism>
    <name type="scientific">Homo sapiens</name>
    <name type="common">Human</name>
    <dbReference type="NCBI Taxonomy" id="9606"/>
    <lineage>
        <taxon>Eukaryota</taxon>
        <taxon>Metazoa</taxon>
        <taxon>Chordata</taxon>
        <taxon>Craniata</taxon>
        <taxon>Vertebrata</taxon>
        <taxon>Euteleostomi</taxon>
        <taxon>Mammalia</taxon>
        <taxon>Eutheria</taxon>
        <taxon>Euarchontoglires</taxon>
        <taxon>Primates</taxon>
        <taxon>Haplorrhini</taxon>
        <taxon>Catarrhini</taxon>
        <taxon>Hominidae</taxon>
        <taxon>Homo</taxon>
    </lineage>
</organism>
<comment type="function">
    <text evidence="6 7 8 9 10">E3 ubiquitin-protein ligase which accepts ubiquitin from E2 ubiquitin-conjugating enzymes UBE2L3 and UBE2L6 in the form of a thioester and then directly transfers the ubiquitin to targeted substrates, such as SNCAIP or CASR. Specifically ubiquitinates pathogenic SOD1 variants, which leads to their proteasomal degradation and to neuronal protection.</text>
</comment>
<comment type="catalytic activity">
    <reaction evidence="1">
        <text>[E2 ubiquitin-conjugating enzyme]-S-ubiquitinyl-L-cysteine + [acceptor protein]-L-lysine = [E2 ubiquitin-conjugating enzyme]-L-cysteine + [acceptor protein]-N(6)-ubiquitinyl-L-lysine.</text>
        <dbReference type="EC" id="2.3.2.31"/>
    </reaction>
</comment>
<comment type="pathway">
    <text>Protein modification; protein ubiquitination.</text>
</comment>
<comment type="subunit">
    <text evidence="5 6 7 8 9 10">Interacts with UBE2L3 and UBE2L6. Interacts with transcription factor Sp1. Interacts with VCP, CASR, SNCAIP and with some SOD1 variants which cause amyotrophic lateral sclerosis, but not with wild-type SOD1.</text>
</comment>
<comment type="interaction">
    <interactant intactId="EBI-1390270">
        <id>Q9NV58</id>
    </interactant>
    <interactant intactId="EBI-990792">
        <id>P00441</id>
        <label>SOD1</label>
    </interactant>
    <organismsDiffer>false</organismsDiffer>
    <experiments>3</experiments>
</comment>
<comment type="subcellular location">
    <subcellularLocation>
        <location evidence="13">Membrane</location>
        <topology evidence="13">Multi-pass membrane protein</topology>
    </subcellularLocation>
    <subcellularLocation>
        <location evidence="6 7 8 9">Cytoplasm</location>
        <location evidence="6 7 8 9">Cytoskeleton</location>
        <location evidence="6 7 8 9">Microtubule organizing center</location>
        <location evidence="6 7 8 9">Centrosome</location>
    </subcellularLocation>
    <text>Present in the hyaline inclusion bodies specifically found in motor neurons from amyotrophic lateral sclerosis patients. Present in the Lewy bodies specifically found in neurons from Parkinson disease patients.</text>
</comment>
<comment type="alternative products">
    <event type="alternative splicing"/>
    <isoform>
        <id>Q9NV58-1</id>
        <name>1</name>
        <sequence type="displayed"/>
    </isoform>
    <isoform>
        <id>Q9NV58-2</id>
        <name>2</name>
        <sequence type="described" ref="VSP_021010 VSP_021011"/>
    </isoform>
    <isoform>
        <id>Q9NV58-3</id>
        <name>3</name>
        <sequence type="described" ref="VSP_028631"/>
    </isoform>
</comment>
<comment type="tissue specificity">
    <text evidence="6">Widely expressed, with highest levels in heart. Ubiquitously expressed in the central nervous system.</text>
</comment>
<comment type="domain">
    <text evidence="1">Members of the RBR family are atypical E3 ligases. They interact with the E2 conjugating enzyme UBE2L3 and function like HECT-type E3 enzymes: they bind E2s via the first RING domain, but require an obligate trans-thiolation step during the ubiquitin transfer, requiring a conserved cysteine residue in the second RING domain.</text>
</comment>
<comment type="similarity">
    <text evidence="13">Belongs to the RBR family. RNF19 subfamily.</text>
</comment>
<comment type="sequence caution" evidence="13">
    <conflict type="erroneous initiation">
        <sequence resource="EMBL-CDS" id="BAB14581"/>
    </conflict>
</comment>
<comment type="sequence caution" evidence="13">
    <conflict type="erroneous initiation">
        <sequence resource="EMBL-CDS" id="BAB15647"/>
    </conflict>
</comment>